<reference key="1">
    <citation type="journal article" date="1999" name="Nucleic Acids Res.">
        <title>A key role for replication factor C in DNA replication checkpoint function in fission yeast.</title>
        <authorList>
            <person name="Reynolds N."/>
            <person name="Fantes P.A."/>
            <person name="MacNeill S.A."/>
        </authorList>
    </citation>
    <scope>NUCLEOTIDE SEQUENCE [MRNA]</scope>
    <scope>MUTAGENESIS OF GLY-59; THR-66; GLU-131; ASP-133; SER-172 AND ARG-173</scope>
</reference>
<reference key="2">
    <citation type="journal article" date="2002" name="Nature">
        <title>The genome sequence of Schizosaccharomyces pombe.</title>
        <authorList>
            <person name="Wood V."/>
            <person name="Gwilliam R."/>
            <person name="Rajandream M.A."/>
            <person name="Lyne M.H."/>
            <person name="Lyne R."/>
            <person name="Stewart A."/>
            <person name="Sgouros J.G."/>
            <person name="Peat N."/>
            <person name="Hayles J."/>
            <person name="Baker S.G."/>
            <person name="Basham D."/>
            <person name="Bowman S."/>
            <person name="Brooks K."/>
            <person name="Brown D."/>
            <person name="Brown S."/>
            <person name="Chillingworth T."/>
            <person name="Churcher C.M."/>
            <person name="Collins M."/>
            <person name="Connor R."/>
            <person name="Cronin A."/>
            <person name="Davis P."/>
            <person name="Feltwell T."/>
            <person name="Fraser A."/>
            <person name="Gentles S."/>
            <person name="Goble A."/>
            <person name="Hamlin N."/>
            <person name="Harris D.E."/>
            <person name="Hidalgo J."/>
            <person name="Hodgson G."/>
            <person name="Holroyd S."/>
            <person name="Hornsby T."/>
            <person name="Howarth S."/>
            <person name="Huckle E.J."/>
            <person name="Hunt S."/>
            <person name="Jagels K."/>
            <person name="James K.D."/>
            <person name="Jones L."/>
            <person name="Jones M."/>
            <person name="Leather S."/>
            <person name="McDonald S."/>
            <person name="McLean J."/>
            <person name="Mooney P."/>
            <person name="Moule S."/>
            <person name="Mungall K.L."/>
            <person name="Murphy L.D."/>
            <person name="Niblett D."/>
            <person name="Odell C."/>
            <person name="Oliver K."/>
            <person name="O'Neil S."/>
            <person name="Pearson D."/>
            <person name="Quail M.A."/>
            <person name="Rabbinowitsch E."/>
            <person name="Rutherford K.M."/>
            <person name="Rutter S."/>
            <person name="Saunders D."/>
            <person name="Seeger K."/>
            <person name="Sharp S."/>
            <person name="Skelton J."/>
            <person name="Simmonds M.N."/>
            <person name="Squares R."/>
            <person name="Squares S."/>
            <person name="Stevens K."/>
            <person name="Taylor K."/>
            <person name="Taylor R.G."/>
            <person name="Tivey A."/>
            <person name="Walsh S.V."/>
            <person name="Warren T."/>
            <person name="Whitehead S."/>
            <person name="Woodward J.R."/>
            <person name="Volckaert G."/>
            <person name="Aert R."/>
            <person name="Robben J."/>
            <person name="Grymonprez B."/>
            <person name="Weltjens I."/>
            <person name="Vanstreels E."/>
            <person name="Rieger M."/>
            <person name="Schaefer M."/>
            <person name="Mueller-Auer S."/>
            <person name="Gabel C."/>
            <person name="Fuchs M."/>
            <person name="Duesterhoeft A."/>
            <person name="Fritzc C."/>
            <person name="Holzer E."/>
            <person name="Moestl D."/>
            <person name="Hilbert H."/>
            <person name="Borzym K."/>
            <person name="Langer I."/>
            <person name="Beck A."/>
            <person name="Lehrach H."/>
            <person name="Reinhardt R."/>
            <person name="Pohl T.M."/>
            <person name="Eger P."/>
            <person name="Zimmermann W."/>
            <person name="Wedler H."/>
            <person name="Wambutt R."/>
            <person name="Purnelle B."/>
            <person name="Goffeau A."/>
            <person name="Cadieu E."/>
            <person name="Dreano S."/>
            <person name="Gloux S."/>
            <person name="Lelaure V."/>
            <person name="Mottier S."/>
            <person name="Galibert F."/>
            <person name="Aves S.J."/>
            <person name="Xiang Z."/>
            <person name="Hunt C."/>
            <person name="Moore K."/>
            <person name="Hurst S.M."/>
            <person name="Lucas M."/>
            <person name="Rochet M."/>
            <person name="Gaillardin C."/>
            <person name="Tallada V.A."/>
            <person name="Garzon A."/>
            <person name="Thode G."/>
            <person name="Daga R.R."/>
            <person name="Cruzado L."/>
            <person name="Jimenez J."/>
            <person name="Sanchez M."/>
            <person name="del Rey F."/>
            <person name="Benito J."/>
            <person name="Dominguez A."/>
            <person name="Revuelta J.L."/>
            <person name="Moreno S."/>
            <person name="Armstrong J."/>
            <person name="Forsburg S.L."/>
            <person name="Cerutti L."/>
            <person name="Lowe T."/>
            <person name="McCombie W.R."/>
            <person name="Paulsen I."/>
            <person name="Potashkin J."/>
            <person name="Shpakovski G.V."/>
            <person name="Ussery D."/>
            <person name="Barrell B.G."/>
            <person name="Nurse P."/>
        </authorList>
    </citation>
    <scope>NUCLEOTIDE SEQUENCE [LARGE SCALE GENOMIC DNA]</scope>
    <source>
        <strain>972 / ATCC 24843</strain>
    </source>
</reference>
<reference key="3">
    <citation type="journal article" date="2005" name="Nucleic Acids Res.">
        <title>Contrasting effects of Elg1-RFC and Ctf18-RFC inactivation in the absence of fully functional RFC in fission yeast.</title>
        <authorList>
            <person name="Kim J."/>
            <person name="Robertson K."/>
            <person name="Mylonas K.J.L."/>
            <person name="Gray F.C."/>
            <person name="Charapitsa I."/>
            <person name="MacNeill S.A."/>
        </authorList>
    </citation>
    <scope>PROTEIN SEQUENCE OF 17-28; 46-83; 116-144; 146-152; 156-165; 179-189 AND 275-296</scope>
    <scope>FUNCTION</scope>
    <scope>SUBUNIT</scope>
</reference>
<dbReference type="EMBL" id="CU329670">
    <property type="protein sequence ID" value="CAA91237.1"/>
    <property type="molecule type" value="Genomic_DNA"/>
</dbReference>
<dbReference type="PIR" id="T38278">
    <property type="entry name" value="S62493"/>
</dbReference>
<dbReference type="RefSeq" id="NP_594540.1">
    <property type="nucleotide sequence ID" value="NM_001019969.2"/>
</dbReference>
<dbReference type="SMR" id="Q09843"/>
<dbReference type="BioGRID" id="278398">
    <property type="interactions" value="8"/>
</dbReference>
<dbReference type="ComplexPortal" id="CPX-546">
    <property type="entry name" value="DNA replication factor C complex"/>
</dbReference>
<dbReference type="FunCoup" id="Q09843">
    <property type="interactions" value="438"/>
</dbReference>
<dbReference type="STRING" id="284812.Q09843"/>
<dbReference type="iPTMnet" id="Q09843"/>
<dbReference type="SwissPalm" id="Q09843"/>
<dbReference type="PaxDb" id="4896-SPAC23D3.02.1"/>
<dbReference type="EnsemblFungi" id="SPAC23D3.02.1">
    <property type="protein sequence ID" value="SPAC23D3.02.1:pep"/>
    <property type="gene ID" value="SPAC23D3.02"/>
</dbReference>
<dbReference type="GeneID" id="2541908"/>
<dbReference type="KEGG" id="spo:2541908"/>
<dbReference type="PomBase" id="SPAC23D3.02">
    <property type="gene designation" value="rfc2"/>
</dbReference>
<dbReference type="VEuPathDB" id="FungiDB:SPAC23D3.02"/>
<dbReference type="eggNOG" id="KOG0989">
    <property type="taxonomic scope" value="Eukaryota"/>
</dbReference>
<dbReference type="HOGENOM" id="CLU_042324_1_0_1"/>
<dbReference type="InParanoid" id="Q09843"/>
<dbReference type="OMA" id="GCQSGSF"/>
<dbReference type="PhylomeDB" id="Q09843"/>
<dbReference type="Reactome" id="R-SPO-110312">
    <property type="pathway name" value="Translesion synthesis by REV1"/>
</dbReference>
<dbReference type="Reactome" id="R-SPO-110314">
    <property type="pathway name" value="Recognition of DNA damage by PCNA-containing replication complex"/>
</dbReference>
<dbReference type="Reactome" id="R-SPO-110320">
    <property type="pathway name" value="Translesion Synthesis by POLH"/>
</dbReference>
<dbReference type="Reactome" id="R-SPO-176187">
    <property type="pathway name" value="Activation of ATR in response to replication stress"/>
</dbReference>
<dbReference type="Reactome" id="R-SPO-5651801">
    <property type="pathway name" value="PCNA-Dependent Long Patch Base Excision Repair"/>
</dbReference>
<dbReference type="Reactome" id="R-SPO-5655862">
    <property type="pathway name" value="Translesion synthesis by POLK"/>
</dbReference>
<dbReference type="Reactome" id="R-SPO-5656121">
    <property type="pathway name" value="Translesion synthesis by POLI"/>
</dbReference>
<dbReference type="Reactome" id="R-SPO-5656169">
    <property type="pathway name" value="Termination of translesion DNA synthesis"/>
</dbReference>
<dbReference type="Reactome" id="R-SPO-5696397">
    <property type="pathway name" value="Gap-filling DNA repair synthesis and ligation in GG-NER"/>
</dbReference>
<dbReference type="Reactome" id="R-SPO-5696400">
    <property type="pathway name" value="Dual Incision in GG-NER"/>
</dbReference>
<dbReference type="Reactome" id="R-SPO-6782135">
    <property type="pathway name" value="Dual incision in TC-NER"/>
</dbReference>
<dbReference type="Reactome" id="R-SPO-6782210">
    <property type="pathway name" value="Gap-filling DNA repair synthesis and ligation in TC-NER"/>
</dbReference>
<dbReference type="Reactome" id="R-SPO-69091">
    <property type="pathway name" value="Polymerase switching"/>
</dbReference>
<dbReference type="PRO" id="PR:Q09843"/>
<dbReference type="Proteomes" id="UP000002485">
    <property type="component" value="Chromosome I"/>
</dbReference>
<dbReference type="GO" id="GO:0000785">
    <property type="term" value="C:chromatin"/>
    <property type="evidence" value="ECO:0000305"/>
    <property type="project" value="PomBase"/>
</dbReference>
<dbReference type="GO" id="GO:0031390">
    <property type="term" value="C:Ctf18 RFC-like complex"/>
    <property type="evidence" value="ECO:0000266"/>
    <property type="project" value="PomBase"/>
</dbReference>
<dbReference type="GO" id="GO:0005829">
    <property type="term" value="C:cytosol"/>
    <property type="evidence" value="ECO:0007005"/>
    <property type="project" value="PomBase"/>
</dbReference>
<dbReference type="GO" id="GO:0005663">
    <property type="term" value="C:DNA replication factor C complex"/>
    <property type="evidence" value="ECO:0000318"/>
    <property type="project" value="GO_Central"/>
</dbReference>
<dbReference type="GO" id="GO:0031391">
    <property type="term" value="C:Elg1 RFC-like complex"/>
    <property type="evidence" value="ECO:0000314"/>
    <property type="project" value="PomBase"/>
</dbReference>
<dbReference type="GO" id="GO:0005634">
    <property type="term" value="C:nucleus"/>
    <property type="evidence" value="ECO:0007005"/>
    <property type="project" value="PomBase"/>
</dbReference>
<dbReference type="GO" id="GO:0031389">
    <property type="term" value="C:Rad17 RFC-like complex"/>
    <property type="evidence" value="ECO:0000266"/>
    <property type="project" value="PomBase"/>
</dbReference>
<dbReference type="GO" id="GO:0005524">
    <property type="term" value="F:ATP binding"/>
    <property type="evidence" value="ECO:0007669"/>
    <property type="project" value="UniProtKB-KW"/>
</dbReference>
<dbReference type="GO" id="GO:0016887">
    <property type="term" value="F:ATP hydrolysis activity"/>
    <property type="evidence" value="ECO:0000303"/>
    <property type="project" value="PomBase"/>
</dbReference>
<dbReference type="GO" id="GO:0003682">
    <property type="term" value="F:chromatin binding"/>
    <property type="evidence" value="ECO:0000314"/>
    <property type="project" value="PomBase"/>
</dbReference>
<dbReference type="GO" id="GO:0003677">
    <property type="term" value="F:DNA binding"/>
    <property type="evidence" value="ECO:0007669"/>
    <property type="project" value="UniProtKB-KW"/>
</dbReference>
<dbReference type="GO" id="GO:0061860">
    <property type="term" value="F:DNA clamp unloader activity"/>
    <property type="evidence" value="ECO:0000305"/>
    <property type="project" value="PomBase"/>
</dbReference>
<dbReference type="GO" id="GO:0006281">
    <property type="term" value="P:DNA repair"/>
    <property type="evidence" value="ECO:0000318"/>
    <property type="project" value="GO_Central"/>
</dbReference>
<dbReference type="GO" id="GO:1902983">
    <property type="term" value="P:DNA strand elongation involved in mitotic DNA replication"/>
    <property type="evidence" value="ECO:0000314"/>
    <property type="project" value="PomBase"/>
</dbReference>
<dbReference type="GO" id="GO:0006261">
    <property type="term" value="P:DNA-templated DNA replication"/>
    <property type="evidence" value="ECO:0000318"/>
    <property type="project" value="GO_Central"/>
</dbReference>
<dbReference type="GO" id="GO:0033314">
    <property type="term" value="P:mitotic DNA replication checkpoint signaling"/>
    <property type="evidence" value="ECO:0000316"/>
    <property type="project" value="PomBase"/>
</dbReference>
<dbReference type="GO" id="GO:1903460">
    <property type="term" value="P:mitotic DNA replication leading strand elongation"/>
    <property type="evidence" value="ECO:0000266"/>
    <property type="project" value="PomBase"/>
</dbReference>
<dbReference type="GO" id="GO:0070914">
    <property type="term" value="P:UV-damage excision repair"/>
    <property type="evidence" value="ECO:0000314"/>
    <property type="project" value="PomBase"/>
</dbReference>
<dbReference type="CDD" id="cd00009">
    <property type="entry name" value="AAA"/>
    <property type="match status" value="1"/>
</dbReference>
<dbReference type="CDD" id="cd18140">
    <property type="entry name" value="HLD_clamp_RFC"/>
    <property type="match status" value="1"/>
</dbReference>
<dbReference type="FunFam" id="1.20.272.10:FF:000011">
    <property type="entry name" value="Replication factor C subunit 2"/>
    <property type="match status" value="1"/>
</dbReference>
<dbReference type="FunFam" id="1.10.8.60:FF:000032">
    <property type="entry name" value="Replication factor C subunit 4"/>
    <property type="match status" value="1"/>
</dbReference>
<dbReference type="FunFam" id="3.40.50.300:FF:000237">
    <property type="entry name" value="replication factor C subunit 4"/>
    <property type="match status" value="1"/>
</dbReference>
<dbReference type="Gene3D" id="1.10.8.60">
    <property type="match status" value="1"/>
</dbReference>
<dbReference type="Gene3D" id="1.20.272.10">
    <property type="match status" value="1"/>
</dbReference>
<dbReference type="Gene3D" id="3.40.50.300">
    <property type="entry name" value="P-loop containing nucleotide triphosphate hydrolases"/>
    <property type="match status" value="1"/>
</dbReference>
<dbReference type="InterPro" id="IPR003593">
    <property type="entry name" value="AAA+_ATPase"/>
</dbReference>
<dbReference type="InterPro" id="IPR003959">
    <property type="entry name" value="ATPase_AAA_core"/>
</dbReference>
<dbReference type="InterPro" id="IPR008921">
    <property type="entry name" value="DNA_pol3_clamp-load_cplx_C"/>
</dbReference>
<dbReference type="InterPro" id="IPR050238">
    <property type="entry name" value="DNA_Rep/Repair_Clamp_Loader"/>
</dbReference>
<dbReference type="InterPro" id="IPR027417">
    <property type="entry name" value="P-loop_NTPase"/>
</dbReference>
<dbReference type="InterPro" id="IPR013748">
    <property type="entry name" value="Rep_factorC_C"/>
</dbReference>
<dbReference type="InterPro" id="IPR047854">
    <property type="entry name" value="RFC_lid"/>
</dbReference>
<dbReference type="NCBIfam" id="NF001679">
    <property type="entry name" value="PRK00440.1"/>
    <property type="match status" value="1"/>
</dbReference>
<dbReference type="PANTHER" id="PTHR11669">
    <property type="entry name" value="REPLICATION FACTOR C / DNA POLYMERASE III GAMMA-TAU SUBUNIT"/>
    <property type="match status" value="1"/>
</dbReference>
<dbReference type="PANTHER" id="PTHR11669:SF20">
    <property type="entry name" value="REPLICATION FACTOR C SUBUNIT 4"/>
    <property type="match status" value="1"/>
</dbReference>
<dbReference type="Pfam" id="PF00004">
    <property type="entry name" value="AAA"/>
    <property type="match status" value="1"/>
</dbReference>
<dbReference type="Pfam" id="PF08542">
    <property type="entry name" value="Rep_fac_C"/>
    <property type="match status" value="1"/>
</dbReference>
<dbReference type="SMART" id="SM00382">
    <property type="entry name" value="AAA"/>
    <property type="match status" value="1"/>
</dbReference>
<dbReference type="SUPFAM" id="SSF52540">
    <property type="entry name" value="P-loop containing nucleoside triphosphate hydrolases"/>
    <property type="match status" value="1"/>
</dbReference>
<dbReference type="SUPFAM" id="SSF48019">
    <property type="entry name" value="post-AAA+ oligomerization domain-like"/>
    <property type="match status" value="1"/>
</dbReference>
<sequence length="340" mass="37877">MSFFAPRNKKTEQEAKKSIPWVELYRPKTLDQVSSQESTVQVLKKTLLSNNLPHMLFYGSPGTGKTSTILALSRELFGPQLMKSRVLELNASDERGISIIREKVKSFAKTTVTNKVDGYPCPPFKIIILDEADSMTQDAQAALRRTMESYARITRFCLICNYMTRIIDPLSSRCSKYRFKPLDNENMVKRLEFIAADQAVSMEPGVVNALVECSGGDMRKAITFLQSAANLHQGTPITISSVEELAGAVPYNIIRSLLDTAYTKNVSNIETLSRDVAAEGYSTGIILSQLHDVLLKEETLSSPVKYKIFMKLSEVDKRLNDGADETLQLLDLLSSISVVC</sequence>
<evidence type="ECO:0000250" key="1"/>
<evidence type="ECO:0000255" key="2"/>
<evidence type="ECO:0000269" key="3">
    <source>
    </source>
</evidence>
<evidence type="ECO:0000269" key="4">
    <source>
    </source>
</evidence>
<evidence type="ECO:0000305" key="5"/>
<organism>
    <name type="scientific">Schizosaccharomyces pombe (strain 972 / ATCC 24843)</name>
    <name type="common">Fission yeast</name>
    <dbReference type="NCBI Taxonomy" id="284812"/>
    <lineage>
        <taxon>Eukaryota</taxon>
        <taxon>Fungi</taxon>
        <taxon>Dikarya</taxon>
        <taxon>Ascomycota</taxon>
        <taxon>Taphrinomycotina</taxon>
        <taxon>Schizosaccharomycetes</taxon>
        <taxon>Schizosaccharomycetales</taxon>
        <taxon>Schizosaccharomycetaceae</taxon>
        <taxon>Schizosaccharomyces</taxon>
    </lineage>
</organism>
<gene>
    <name type="primary">rfc2</name>
    <name type="ORF">SPAC23D3.02</name>
</gene>
<protein>
    <recommendedName>
        <fullName>Replication factor C subunit 2</fullName>
        <shortName>Replication factor C2</shortName>
    </recommendedName>
    <alternativeName>
        <fullName>Activator 1 41 kDa subunit</fullName>
    </alternativeName>
</protein>
<proteinExistence type="evidence at protein level"/>
<name>RFC2_SCHPO</name>
<keyword id="KW-0067">ATP-binding</keyword>
<keyword id="KW-0903">Direct protein sequencing</keyword>
<keyword id="KW-0235">DNA replication</keyword>
<keyword id="KW-0238">DNA-binding</keyword>
<keyword id="KW-0547">Nucleotide-binding</keyword>
<keyword id="KW-0539">Nucleus</keyword>
<keyword id="KW-1185">Reference proteome</keyword>
<accession>Q09843</accession>
<feature type="chain" id="PRO_0000121759" description="Replication factor C subunit 2">
    <location>
        <begin position="1"/>
        <end position="340"/>
    </location>
</feature>
<feature type="binding site" evidence="2">
    <location>
        <begin position="59"/>
        <end position="66"/>
    </location>
    <ligand>
        <name>ATP</name>
        <dbReference type="ChEBI" id="CHEBI:30616"/>
    </ligand>
</feature>
<feature type="mutagenesis site" description="Not functional." evidence="4">
    <original>G</original>
    <variation>V</variation>
    <location>
        <position position="59"/>
    </location>
</feature>
<feature type="mutagenesis site" description="Normal growth." evidence="4">
    <original>T</original>
    <variation>N</variation>
    <location>
        <position position="66"/>
    </location>
</feature>
<feature type="mutagenesis site" description="Poor growth." evidence="4">
    <original>E</original>
    <variation>Q</variation>
    <location>
        <position position="131"/>
    </location>
</feature>
<feature type="mutagenesis site" description="Not functional." evidence="4">
    <original>D</original>
    <variation>H</variation>
    <location>
        <position position="133"/>
    </location>
</feature>
<feature type="mutagenesis site" description="Normal growth." evidence="4">
    <original>S</original>
    <variation>A</variation>
    <location>
        <position position="172"/>
    </location>
</feature>
<feature type="mutagenesis site" description="Poor growth." evidence="4">
    <original>R</original>
    <variation>K</variation>
    <location>
        <position position="173"/>
    </location>
</feature>
<comment type="function">
    <text evidence="3">The elongation of primed DNA templates by DNA polymerase delta and epsilon requires the action of the accessory proteins PCNA and activator 1. Subunit 2 binds ATP and single-stranded DNA.</text>
</comment>
<comment type="subunit">
    <text evidence="3">Heteropentamer of subunits rfc1, rfc2, rfc3, rfc4 and rfc5 that forms a complex (RFC) with PCNA in the presence of ATP. Two other complexes exist where rfc1 can be replaced by either ctf18 or elg1 to form the ctf18-RFC or the elg1-RFC complexes respectively.</text>
</comment>
<comment type="subcellular location">
    <subcellularLocation>
        <location evidence="1">Nucleus</location>
    </subcellularLocation>
</comment>
<comment type="similarity">
    <text evidence="5">Belongs to the activator 1 small subunits family.</text>
</comment>